<accession>Q19V73</accession>
<sequence>MQDFTKYLSTAPVLSALWFAILAGLLIEINRFFPDALLFPFG</sequence>
<name>PSAJ_CHLAT</name>
<feature type="chain" id="PRO_0000354136" description="Photosystem I reaction center subunit IX">
    <location>
        <begin position="1"/>
        <end position="42"/>
    </location>
</feature>
<feature type="transmembrane region" description="Helical" evidence="1">
    <location>
        <begin position="7"/>
        <end position="27"/>
    </location>
</feature>
<comment type="function">
    <text evidence="1">May help in the organization of the PsaE and PsaF subunits.</text>
</comment>
<comment type="subcellular location">
    <subcellularLocation>
        <location evidence="1">Plastid</location>
        <location evidence="1">Chloroplast thylakoid membrane</location>
        <topology evidence="1">Single-pass membrane protein</topology>
    </subcellularLocation>
</comment>
<comment type="similarity">
    <text evidence="1">Belongs to the PsaJ family.</text>
</comment>
<evidence type="ECO:0000255" key="1">
    <source>
        <dbReference type="HAMAP-Rule" id="MF_00522"/>
    </source>
</evidence>
<protein>
    <recommendedName>
        <fullName evidence="1">Photosystem I reaction center subunit IX</fullName>
    </recommendedName>
    <alternativeName>
        <fullName evidence="1">PSI-J</fullName>
    </alternativeName>
</protein>
<gene>
    <name evidence="1" type="primary">psaJ</name>
</gene>
<reference key="1">
    <citation type="journal article" date="2007" name="BMC Biol.">
        <title>A clade uniting the green algae Mesostigma viride and Chlorokybus atmophyticus represents the deepest branch of the Streptophyta in chloroplast genome-based phylogenies.</title>
        <authorList>
            <person name="Lemieux C."/>
            <person name="Otis C."/>
            <person name="Turmel M."/>
        </authorList>
    </citation>
    <scope>NUCLEOTIDE SEQUENCE [LARGE SCALE GENOMIC DNA]</scope>
    <source>
        <strain>SAG 48.80</strain>
    </source>
</reference>
<dbReference type="EMBL" id="DQ422812">
    <property type="protein sequence ID" value="ABD62209.2"/>
    <property type="molecule type" value="Genomic_DNA"/>
</dbReference>
<dbReference type="RefSeq" id="YP_001019136.1">
    <property type="nucleotide sequence ID" value="NC_008822.1"/>
</dbReference>
<dbReference type="SMR" id="Q19V73"/>
<dbReference type="GeneID" id="4783185"/>
<dbReference type="GO" id="GO:0009535">
    <property type="term" value="C:chloroplast thylakoid membrane"/>
    <property type="evidence" value="ECO:0007669"/>
    <property type="project" value="UniProtKB-SubCell"/>
</dbReference>
<dbReference type="GO" id="GO:0009522">
    <property type="term" value="C:photosystem I"/>
    <property type="evidence" value="ECO:0007669"/>
    <property type="project" value="UniProtKB-KW"/>
</dbReference>
<dbReference type="GO" id="GO:0015979">
    <property type="term" value="P:photosynthesis"/>
    <property type="evidence" value="ECO:0007669"/>
    <property type="project" value="UniProtKB-UniRule"/>
</dbReference>
<dbReference type="Gene3D" id="1.20.5.510">
    <property type="entry name" value="Single helix bin"/>
    <property type="match status" value="1"/>
</dbReference>
<dbReference type="HAMAP" id="MF_00522">
    <property type="entry name" value="PSI_PsaJ"/>
    <property type="match status" value="1"/>
</dbReference>
<dbReference type="InterPro" id="IPR002615">
    <property type="entry name" value="PSI_PsaJ"/>
</dbReference>
<dbReference type="InterPro" id="IPR036062">
    <property type="entry name" value="PSI_PsaJ_sf"/>
</dbReference>
<dbReference type="PANTHER" id="PTHR36082">
    <property type="match status" value="1"/>
</dbReference>
<dbReference type="PANTHER" id="PTHR36082:SF2">
    <property type="entry name" value="PHOTOSYSTEM I REACTION CENTER SUBUNIT IX"/>
    <property type="match status" value="1"/>
</dbReference>
<dbReference type="Pfam" id="PF01701">
    <property type="entry name" value="PSI_PsaJ"/>
    <property type="match status" value="1"/>
</dbReference>
<dbReference type="SUPFAM" id="SSF81544">
    <property type="entry name" value="Subunit IX of photosystem I reaction centre, PsaJ"/>
    <property type="match status" value="1"/>
</dbReference>
<keyword id="KW-0150">Chloroplast</keyword>
<keyword id="KW-0472">Membrane</keyword>
<keyword id="KW-0602">Photosynthesis</keyword>
<keyword id="KW-0603">Photosystem I</keyword>
<keyword id="KW-0934">Plastid</keyword>
<keyword id="KW-0793">Thylakoid</keyword>
<keyword id="KW-0812">Transmembrane</keyword>
<keyword id="KW-1133">Transmembrane helix</keyword>
<geneLocation type="chloroplast"/>
<proteinExistence type="inferred from homology"/>
<organism>
    <name type="scientific">Chlorokybus atmophyticus</name>
    <name type="common">Soil alga</name>
    <dbReference type="NCBI Taxonomy" id="3144"/>
    <lineage>
        <taxon>Eukaryota</taxon>
        <taxon>Viridiplantae</taxon>
        <taxon>Streptophyta</taxon>
        <taxon>Chlorokybophyceae</taxon>
        <taxon>Chlorokybales</taxon>
        <taxon>Chlorokybaceae</taxon>
        <taxon>Chlorokybus</taxon>
    </lineage>
</organism>